<dbReference type="EC" id="1.11.1.24" evidence="1"/>
<dbReference type="EMBL" id="AE017199">
    <property type="protein sequence ID" value="AAR39045.1"/>
    <property type="molecule type" value="Genomic_DNA"/>
</dbReference>
<dbReference type="SMR" id="Q74NC6"/>
<dbReference type="STRING" id="228908.NEQ191"/>
<dbReference type="EnsemblBacteria" id="AAR39045">
    <property type="protein sequence ID" value="AAR39045"/>
    <property type="gene ID" value="NEQ191"/>
</dbReference>
<dbReference type="KEGG" id="neq:NEQ191"/>
<dbReference type="PATRIC" id="fig|228908.8.peg.195"/>
<dbReference type="HOGENOM" id="CLU_042529_4_4_2"/>
<dbReference type="BioCyc" id="NEQU228908:GJB6-206-MONOMER"/>
<dbReference type="Proteomes" id="UP000000578">
    <property type="component" value="Chromosome"/>
</dbReference>
<dbReference type="GO" id="GO:0005829">
    <property type="term" value="C:cytosol"/>
    <property type="evidence" value="ECO:0007669"/>
    <property type="project" value="TreeGrafter"/>
</dbReference>
<dbReference type="GO" id="GO:0008379">
    <property type="term" value="F:thioredoxin peroxidase activity"/>
    <property type="evidence" value="ECO:0007669"/>
    <property type="project" value="TreeGrafter"/>
</dbReference>
<dbReference type="GO" id="GO:0045454">
    <property type="term" value="P:cell redox homeostasis"/>
    <property type="evidence" value="ECO:0007669"/>
    <property type="project" value="TreeGrafter"/>
</dbReference>
<dbReference type="GO" id="GO:0033554">
    <property type="term" value="P:cellular response to stress"/>
    <property type="evidence" value="ECO:0007669"/>
    <property type="project" value="TreeGrafter"/>
</dbReference>
<dbReference type="GO" id="GO:0042744">
    <property type="term" value="P:hydrogen peroxide catabolic process"/>
    <property type="evidence" value="ECO:0007669"/>
    <property type="project" value="TreeGrafter"/>
</dbReference>
<dbReference type="GO" id="GO:0006979">
    <property type="term" value="P:response to oxidative stress"/>
    <property type="evidence" value="ECO:0007669"/>
    <property type="project" value="TreeGrafter"/>
</dbReference>
<dbReference type="CDD" id="cd03016">
    <property type="entry name" value="PRX_1cys"/>
    <property type="match status" value="1"/>
</dbReference>
<dbReference type="FunFam" id="3.30.1020.10:FF:000002">
    <property type="entry name" value="Peroxiredoxin"/>
    <property type="match status" value="1"/>
</dbReference>
<dbReference type="FunFam" id="3.40.30.10:FF:000011">
    <property type="entry name" value="Peroxiredoxin PRX1"/>
    <property type="match status" value="1"/>
</dbReference>
<dbReference type="Gene3D" id="3.30.1020.10">
    <property type="entry name" value="Antioxidant, Horf6, Chain A, domain2"/>
    <property type="match status" value="1"/>
</dbReference>
<dbReference type="Gene3D" id="3.40.30.10">
    <property type="entry name" value="Glutaredoxin"/>
    <property type="match status" value="1"/>
</dbReference>
<dbReference type="HAMAP" id="MF_00401">
    <property type="entry name" value="Peroxiredoxin"/>
    <property type="match status" value="1"/>
</dbReference>
<dbReference type="InterPro" id="IPR000866">
    <property type="entry name" value="AhpC/TSA"/>
</dbReference>
<dbReference type="InterPro" id="IPR050217">
    <property type="entry name" value="Peroxiredoxin"/>
</dbReference>
<dbReference type="InterPro" id="IPR024706">
    <property type="entry name" value="Peroxiredoxin_AhpC-typ"/>
</dbReference>
<dbReference type="InterPro" id="IPR019479">
    <property type="entry name" value="Peroxiredoxin_C"/>
</dbReference>
<dbReference type="InterPro" id="IPR022915">
    <property type="entry name" value="Peroxiredoxin_TDXH"/>
</dbReference>
<dbReference type="InterPro" id="IPR045020">
    <property type="entry name" value="PRX_1cys"/>
</dbReference>
<dbReference type="InterPro" id="IPR036249">
    <property type="entry name" value="Thioredoxin-like_sf"/>
</dbReference>
<dbReference type="InterPro" id="IPR013766">
    <property type="entry name" value="Thioredoxin_domain"/>
</dbReference>
<dbReference type="NCBIfam" id="NF009668">
    <property type="entry name" value="PRK13189.1"/>
    <property type="match status" value="1"/>
</dbReference>
<dbReference type="PANTHER" id="PTHR10681">
    <property type="entry name" value="THIOREDOXIN PEROXIDASE"/>
    <property type="match status" value="1"/>
</dbReference>
<dbReference type="PANTHER" id="PTHR10681:SF128">
    <property type="entry name" value="THIOREDOXIN-DEPENDENT PEROXIDE REDUCTASE, MITOCHONDRIAL"/>
    <property type="match status" value="1"/>
</dbReference>
<dbReference type="Pfam" id="PF10417">
    <property type="entry name" value="1-cysPrx_C"/>
    <property type="match status" value="1"/>
</dbReference>
<dbReference type="Pfam" id="PF00578">
    <property type="entry name" value="AhpC-TSA"/>
    <property type="match status" value="1"/>
</dbReference>
<dbReference type="PIRSF" id="PIRSF000239">
    <property type="entry name" value="AHPC"/>
    <property type="match status" value="1"/>
</dbReference>
<dbReference type="SUPFAM" id="SSF52833">
    <property type="entry name" value="Thioredoxin-like"/>
    <property type="match status" value="1"/>
</dbReference>
<dbReference type="PROSITE" id="PS51352">
    <property type="entry name" value="THIOREDOXIN_2"/>
    <property type="match status" value="1"/>
</dbReference>
<comment type="function">
    <text evidence="1">Thiol-specific peroxidase that catalyzes the reduction of hydrogen peroxide and organic hydroperoxides to water and alcohols, respectively. Plays a role in cell protection against oxidative stress by detoxifying peroxides.</text>
</comment>
<comment type="catalytic activity">
    <reaction evidence="1">
        <text>a hydroperoxide + [thioredoxin]-dithiol = an alcohol + [thioredoxin]-disulfide + H2O</text>
        <dbReference type="Rhea" id="RHEA:62620"/>
        <dbReference type="Rhea" id="RHEA-COMP:10698"/>
        <dbReference type="Rhea" id="RHEA-COMP:10700"/>
        <dbReference type="ChEBI" id="CHEBI:15377"/>
        <dbReference type="ChEBI" id="CHEBI:29950"/>
        <dbReference type="ChEBI" id="CHEBI:30879"/>
        <dbReference type="ChEBI" id="CHEBI:35924"/>
        <dbReference type="ChEBI" id="CHEBI:50058"/>
        <dbReference type="EC" id="1.11.1.24"/>
    </reaction>
</comment>
<comment type="subunit">
    <text evidence="1">Homodecamer. Pentamer of dimers that assemble into a ring structure.</text>
</comment>
<comment type="subcellular location">
    <subcellularLocation>
        <location evidence="1">Cytoplasm</location>
    </subcellularLocation>
</comment>
<comment type="miscellaneous">
    <text evidence="1">The active site is a conserved redox-active cysteine residue, the peroxidatic cysteine (C(P)), which makes the nucleophilic attack on the peroxide substrate. The peroxide oxidizes the C(P)-SH to cysteine sulfenic acid (C(P)-SOH), which then reacts with another cysteine residue, the resolving cysteine (C(R)), to form a disulfide bridge. The disulfide is subsequently reduced by an appropriate electron donor to complete the catalytic cycle. Although the primary sequence of this enzyme is similar to those of the 1-Cys Prx6 enzymes, its catalytic properties resemble those of the typical 2-Cys Prxs and C(R) is provided by the other dimeric subunit to form an intersubunit disulfide. The disulfide is subsequently reduced by thioredoxin.</text>
</comment>
<comment type="similarity">
    <text evidence="1">Belongs to the peroxiredoxin family. Prx6 subfamily.</text>
</comment>
<proteinExistence type="inferred from homology"/>
<sequence length="222" mass="25849">MVVLGQKFPEVEVQTTHGRMRLPDHYRGKWFVLFSHPADFTPVCTTEFVEFARNYDKFKAMNTELIGLSIDQVFSHIKWIEWIKEKFNVEIPFPVIADDQGELARMLGMISPYKGTNTVRAVFIVDPEGYIRAMLYYPQETGRNIPEILRLVEALQTADKYGVATPANWHVDRYEFKPSSIVGNDVIIPPASSLEEKKDREERAKKGEIECFDWWFCHKKLE</sequence>
<gene>
    <name type="ordered locus">NEQ191</name>
</gene>
<protein>
    <recommendedName>
        <fullName evidence="1">Peroxiredoxin</fullName>
        <ecNumber evidence="1">1.11.1.24</ecNumber>
    </recommendedName>
    <alternativeName>
        <fullName evidence="1">Thioredoxin peroxidase</fullName>
    </alternativeName>
    <alternativeName>
        <fullName evidence="1">Thioredoxin-dependent peroxiredoxin</fullName>
    </alternativeName>
</protein>
<feature type="chain" id="PRO_0000135160" description="Peroxiredoxin">
    <location>
        <begin position="1"/>
        <end position="222"/>
    </location>
</feature>
<feature type="domain" description="Thioredoxin" evidence="1">
    <location>
        <begin position="2"/>
        <end position="157"/>
    </location>
</feature>
<feature type="active site" description="Cysteine sulfenic acid (-SOH) intermediate" evidence="1">
    <location>
        <position position="44"/>
    </location>
</feature>
<feature type="binding site" evidence="1">
    <location>
        <position position="120"/>
    </location>
    <ligand>
        <name>substrate</name>
    </ligand>
</feature>
<feature type="disulfide bond" description="Interchain (with C-217); in linked form" evidence="1">
    <location>
        <position position="44"/>
    </location>
</feature>
<feature type="disulfide bond" description="Alternate" evidence="1">
    <location>
        <begin position="211"/>
        <end position="217"/>
    </location>
</feature>
<feature type="disulfide bond" description="Interchain (with C-44); in linked form" evidence="1">
    <location>
        <position position="217"/>
    </location>
</feature>
<keyword id="KW-0049">Antioxidant</keyword>
<keyword id="KW-0963">Cytoplasm</keyword>
<keyword id="KW-1015">Disulfide bond</keyword>
<keyword id="KW-0560">Oxidoreductase</keyword>
<keyword id="KW-0575">Peroxidase</keyword>
<keyword id="KW-0676">Redox-active center</keyword>
<keyword id="KW-1185">Reference proteome</keyword>
<organism>
    <name type="scientific">Nanoarchaeum equitans (strain Kin4-M)</name>
    <dbReference type="NCBI Taxonomy" id="228908"/>
    <lineage>
        <taxon>Archaea</taxon>
        <taxon>Nanobdellota</taxon>
        <taxon>Candidatus Nanoarchaeia</taxon>
        <taxon>Nanoarchaeales</taxon>
        <taxon>Nanoarchaeaceae</taxon>
        <taxon>Nanoarchaeum</taxon>
    </lineage>
</organism>
<name>TDXH_NANEQ</name>
<evidence type="ECO:0000255" key="1">
    <source>
        <dbReference type="HAMAP-Rule" id="MF_00401"/>
    </source>
</evidence>
<accession>Q74NC6</accession>
<reference key="1">
    <citation type="journal article" date="2003" name="Proc. Natl. Acad. Sci. U.S.A.">
        <title>The genome of Nanoarchaeum equitans: insights into early archaeal evolution and derived parasitism.</title>
        <authorList>
            <person name="Waters E."/>
            <person name="Hohn M.J."/>
            <person name="Ahel I."/>
            <person name="Graham D.E."/>
            <person name="Adams M.D."/>
            <person name="Barnstead M."/>
            <person name="Beeson K.Y."/>
            <person name="Bibbs L."/>
            <person name="Bolanos R."/>
            <person name="Keller M."/>
            <person name="Kretz K."/>
            <person name="Lin X."/>
            <person name="Mathur E."/>
            <person name="Ni J."/>
            <person name="Podar M."/>
            <person name="Richardson T."/>
            <person name="Sutton G.G."/>
            <person name="Simon M."/>
            <person name="Soell D."/>
            <person name="Stetter K.O."/>
            <person name="Short J.M."/>
            <person name="Noorderwier M."/>
        </authorList>
    </citation>
    <scope>NUCLEOTIDE SEQUENCE [LARGE SCALE GENOMIC DNA]</scope>
    <source>
        <strain>Kin4-M</strain>
    </source>
</reference>